<feature type="chain" id="PRO_1000187344" description="Methylthioribulose-1-phosphate dehydratase">
    <location>
        <begin position="1"/>
        <end position="212"/>
    </location>
</feature>
<feature type="binding site" evidence="1">
    <location>
        <position position="97"/>
    </location>
    <ligand>
        <name>Zn(2+)</name>
        <dbReference type="ChEBI" id="CHEBI:29105"/>
    </ligand>
</feature>
<feature type="binding site" evidence="1">
    <location>
        <position position="99"/>
    </location>
    <ligand>
        <name>Zn(2+)</name>
        <dbReference type="ChEBI" id="CHEBI:29105"/>
    </ligand>
</feature>
<comment type="function">
    <text evidence="1">Catalyzes the dehydration of methylthioribulose-1-phosphate (MTRu-1-P) into 2,3-diketo-5-methylthiopentyl-1-phosphate (DK-MTP-1-P).</text>
</comment>
<comment type="catalytic activity">
    <reaction evidence="1">
        <text>5-(methylsulfanyl)-D-ribulose 1-phosphate = 5-methylsulfanyl-2,3-dioxopentyl phosphate + H2O</text>
        <dbReference type="Rhea" id="RHEA:15549"/>
        <dbReference type="ChEBI" id="CHEBI:15377"/>
        <dbReference type="ChEBI" id="CHEBI:58548"/>
        <dbReference type="ChEBI" id="CHEBI:58828"/>
        <dbReference type="EC" id="4.2.1.109"/>
    </reaction>
</comment>
<comment type="cofactor">
    <cofactor evidence="1">
        <name>Zn(2+)</name>
        <dbReference type="ChEBI" id="CHEBI:29105"/>
    </cofactor>
    <text evidence="1">Binds 1 zinc ion per subunit.</text>
</comment>
<comment type="pathway">
    <text evidence="1">Amino-acid biosynthesis; L-methionine biosynthesis via salvage pathway; L-methionine from S-methyl-5-thio-alpha-D-ribose 1-phosphate: step 2/6.</text>
</comment>
<comment type="subunit">
    <text evidence="1">Homotetramer.</text>
</comment>
<comment type="similarity">
    <text evidence="1">Belongs to the aldolase class II family. MtnB subfamily.</text>
</comment>
<keyword id="KW-0028">Amino-acid biosynthesis</keyword>
<keyword id="KW-0456">Lyase</keyword>
<keyword id="KW-0479">Metal-binding</keyword>
<keyword id="KW-0486">Methionine biosynthesis</keyword>
<keyword id="KW-0862">Zinc</keyword>
<reference key="1">
    <citation type="submission" date="2008-10" db="EMBL/GenBank/DDBJ databases">
        <title>Genome sequence of Bacillus cereus B4264.</title>
        <authorList>
            <person name="Dodson R.J."/>
            <person name="Durkin A.S."/>
            <person name="Rosovitz M.J."/>
            <person name="Rasko D.A."/>
            <person name="Hoffmaster A."/>
            <person name="Ravel J."/>
            <person name="Sutton G."/>
        </authorList>
    </citation>
    <scope>NUCLEOTIDE SEQUENCE [LARGE SCALE GENOMIC DNA]</scope>
    <source>
        <strain>B4264</strain>
    </source>
</reference>
<protein>
    <recommendedName>
        <fullName evidence="1">Methylthioribulose-1-phosphate dehydratase</fullName>
        <shortName evidence="1">MTRu-1-P dehydratase</shortName>
        <ecNumber evidence="1">4.2.1.109</ecNumber>
    </recommendedName>
</protein>
<accession>B7H929</accession>
<name>MTNB_BACC4</name>
<organism>
    <name type="scientific">Bacillus cereus (strain B4264)</name>
    <dbReference type="NCBI Taxonomy" id="405532"/>
    <lineage>
        <taxon>Bacteria</taxon>
        <taxon>Bacillati</taxon>
        <taxon>Bacillota</taxon>
        <taxon>Bacilli</taxon>
        <taxon>Bacillales</taxon>
        <taxon>Bacillaceae</taxon>
        <taxon>Bacillus</taxon>
        <taxon>Bacillus cereus group</taxon>
    </lineage>
</organism>
<dbReference type="EC" id="4.2.1.109" evidence="1"/>
<dbReference type="EMBL" id="CP001176">
    <property type="protein sequence ID" value="ACK59563.1"/>
    <property type="molecule type" value="Genomic_DNA"/>
</dbReference>
<dbReference type="RefSeq" id="WP_000811341.1">
    <property type="nucleotide sequence ID" value="NC_011725.1"/>
</dbReference>
<dbReference type="SMR" id="B7H929"/>
<dbReference type="KEGG" id="bcb:BCB4264_A4147"/>
<dbReference type="HOGENOM" id="CLU_006033_4_1_9"/>
<dbReference type="UniPathway" id="UPA00904">
    <property type="reaction ID" value="UER00875"/>
</dbReference>
<dbReference type="Proteomes" id="UP000007096">
    <property type="component" value="Chromosome"/>
</dbReference>
<dbReference type="GO" id="GO:0005737">
    <property type="term" value="C:cytoplasm"/>
    <property type="evidence" value="ECO:0007669"/>
    <property type="project" value="InterPro"/>
</dbReference>
<dbReference type="GO" id="GO:0046570">
    <property type="term" value="F:methylthioribulose 1-phosphate dehydratase activity"/>
    <property type="evidence" value="ECO:0007669"/>
    <property type="project" value="UniProtKB-UniRule"/>
</dbReference>
<dbReference type="GO" id="GO:0008270">
    <property type="term" value="F:zinc ion binding"/>
    <property type="evidence" value="ECO:0007669"/>
    <property type="project" value="UniProtKB-UniRule"/>
</dbReference>
<dbReference type="GO" id="GO:0019509">
    <property type="term" value="P:L-methionine salvage from methylthioadenosine"/>
    <property type="evidence" value="ECO:0007669"/>
    <property type="project" value="UniProtKB-UniRule"/>
</dbReference>
<dbReference type="FunFam" id="3.40.225.10:FF:000007">
    <property type="entry name" value="Methylthioribulose-1-phosphate dehydratase"/>
    <property type="match status" value="1"/>
</dbReference>
<dbReference type="Gene3D" id="3.40.225.10">
    <property type="entry name" value="Class II aldolase/adducin N-terminal domain"/>
    <property type="match status" value="1"/>
</dbReference>
<dbReference type="HAMAP" id="MF_01677">
    <property type="entry name" value="Salvage_MtnB"/>
    <property type="match status" value="1"/>
</dbReference>
<dbReference type="InterPro" id="IPR001303">
    <property type="entry name" value="Aldolase_II/adducin_N"/>
</dbReference>
<dbReference type="InterPro" id="IPR036409">
    <property type="entry name" value="Aldolase_II/adducin_N_sf"/>
</dbReference>
<dbReference type="InterPro" id="IPR017714">
    <property type="entry name" value="MethylthioRu-1-P_deHdtase_MtnB"/>
</dbReference>
<dbReference type="NCBIfam" id="NF005244">
    <property type="entry name" value="PRK06754.1"/>
    <property type="match status" value="1"/>
</dbReference>
<dbReference type="NCBIfam" id="TIGR03328">
    <property type="entry name" value="salvage_mtnB"/>
    <property type="match status" value="1"/>
</dbReference>
<dbReference type="PANTHER" id="PTHR10640">
    <property type="entry name" value="METHYLTHIORIBULOSE-1-PHOSPHATE DEHYDRATASE"/>
    <property type="match status" value="1"/>
</dbReference>
<dbReference type="PANTHER" id="PTHR10640:SF7">
    <property type="entry name" value="METHYLTHIORIBULOSE-1-PHOSPHATE DEHYDRATASE"/>
    <property type="match status" value="1"/>
</dbReference>
<dbReference type="Pfam" id="PF00596">
    <property type="entry name" value="Aldolase_II"/>
    <property type="match status" value="1"/>
</dbReference>
<dbReference type="SMART" id="SM01007">
    <property type="entry name" value="Aldolase_II"/>
    <property type="match status" value="1"/>
</dbReference>
<dbReference type="SUPFAM" id="SSF53639">
    <property type="entry name" value="AraD/HMP-PK domain-like"/>
    <property type="match status" value="1"/>
</dbReference>
<gene>
    <name evidence="1" type="primary">mtnB</name>
    <name type="ordered locus">BCB4264_A4147</name>
</gene>
<sequence>MKQLFRQWYDLSEIKKELTTRNWFPATSGNISIKVSHEPLTFLITASGKDKTKTTPDDFLLVDHVGVPVLETELRPSAETILHTHIYNNTNAGCVLHVHTTDNNVITNLYSDAVTLQNQEIIKALDIWEEGATIHIPIIENHAHIPTLGENFRKHIQGDSGAVLIRNHGITVWGRDSFDAKKRLEAYEFLFQFHIKLLSIQGGVSNGANSYS</sequence>
<evidence type="ECO:0000255" key="1">
    <source>
        <dbReference type="HAMAP-Rule" id="MF_01677"/>
    </source>
</evidence>
<proteinExistence type="inferred from homology"/>